<accession>B1KMZ0</accession>
<dbReference type="EC" id="2.7.7.6" evidence="1"/>
<dbReference type="EMBL" id="CP000961">
    <property type="protein sequence ID" value="ACA88947.1"/>
    <property type="molecule type" value="Genomic_DNA"/>
</dbReference>
<dbReference type="RefSeq" id="WP_012327266.1">
    <property type="nucleotide sequence ID" value="NC_010506.1"/>
</dbReference>
<dbReference type="SMR" id="B1KMZ0"/>
<dbReference type="STRING" id="392500.Swoo_4697"/>
<dbReference type="KEGG" id="swd:Swoo_4697"/>
<dbReference type="eggNOG" id="COG0085">
    <property type="taxonomic scope" value="Bacteria"/>
</dbReference>
<dbReference type="HOGENOM" id="CLU_000524_4_3_6"/>
<dbReference type="Proteomes" id="UP000002168">
    <property type="component" value="Chromosome"/>
</dbReference>
<dbReference type="GO" id="GO:0000428">
    <property type="term" value="C:DNA-directed RNA polymerase complex"/>
    <property type="evidence" value="ECO:0007669"/>
    <property type="project" value="UniProtKB-KW"/>
</dbReference>
<dbReference type="GO" id="GO:0003677">
    <property type="term" value="F:DNA binding"/>
    <property type="evidence" value="ECO:0007669"/>
    <property type="project" value="UniProtKB-UniRule"/>
</dbReference>
<dbReference type="GO" id="GO:0003899">
    <property type="term" value="F:DNA-directed RNA polymerase activity"/>
    <property type="evidence" value="ECO:0007669"/>
    <property type="project" value="UniProtKB-UniRule"/>
</dbReference>
<dbReference type="GO" id="GO:0032549">
    <property type="term" value="F:ribonucleoside binding"/>
    <property type="evidence" value="ECO:0007669"/>
    <property type="project" value="InterPro"/>
</dbReference>
<dbReference type="GO" id="GO:0006351">
    <property type="term" value="P:DNA-templated transcription"/>
    <property type="evidence" value="ECO:0007669"/>
    <property type="project" value="UniProtKB-UniRule"/>
</dbReference>
<dbReference type="CDD" id="cd00653">
    <property type="entry name" value="RNA_pol_B_RPB2"/>
    <property type="match status" value="1"/>
</dbReference>
<dbReference type="FunFam" id="2.40.270.10:FF:000003">
    <property type="entry name" value="DNA-directed RNA polymerase subunit beta"/>
    <property type="match status" value="1"/>
</dbReference>
<dbReference type="FunFam" id="2.40.270.10:FF:000004">
    <property type="entry name" value="DNA-directed RNA polymerase subunit beta"/>
    <property type="match status" value="1"/>
</dbReference>
<dbReference type="FunFam" id="2.40.50.100:FF:000006">
    <property type="entry name" value="DNA-directed RNA polymerase subunit beta"/>
    <property type="match status" value="1"/>
</dbReference>
<dbReference type="FunFam" id="2.40.50.150:FF:000001">
    <property type="entry name" value="DNA-directed RNA polymerase subunit beta"/>
    <property type="match status" value="1"/>
</dbReference>
<dbReference type="FunFam" id="3.90.1100.10:FF:000002">
    <property type="entry name" value="DNA-directed RNA polymerase subunit beta"/>
    <property type="match status" value="1"/>
</dbReference>
<dbReference type="FunFam" id="3.90.1110.10:FF:000001">
    <property type="entry name" value="DNA-directed RNA polymerase subunit beta"/>
    <property type="match status" value="1"/>
</dbReference>
<dbReference type="FunFam" id="3.90.1110.10:FF:000004">
    <property type="entry name" value="DNA-directed RNA polymerase subunit beta"/>
    <property type="match status" value="1"/>
</dbReference>
<dbReference type="FunFam" id="3.90.1800.10:FF:000001">
    <property type="entry name" value="DNA-directed RNA polymerase subunit beta"/>
    <property type="match status" value="1"/>
</dbReference>
<dbReference type="Gene3D" id="2.40.50.100">
    <property type="match status" value="1"/>
</dbReference>
<dbReference type="Gene3D" id="2.40.50.150">
    <property type="match status" value="1"/>
</dbReference>
<dbReference type="Gene3D" id="3.90.1100.10">
    <property type="match status" value="3"/>
</dbReference>
<dbReference type="Gene3D" id="2.40.270.10">
    <property type="entry name" value="DNA-directed RNA polymerase, subunit 2, domain 6"/>
    <property type="match status" value="1"/>
</dbReference>
<dbReference type="Gene3D" id="3.90.1800.10">
    <property type="entry name" value="RNA polymerase alpha subunit dimerisation domain"/>
    <property type="match status" value="1"/>
</dbReference>
<dbReference type="Gene3D" id="3.90.1110.10">
    <property type="entry name" value="RNA polymerase Rpb2, domain 2"/>
    <property type="match status" value="1"/>
</dbReference>
<dbReference type="HAMAP" id="MF_01321">
    <property type="entry name" value="RNApol_bact_RpoB"/>
    <property type="match status" value="1"/>
</dbReference>
<dbReference type="InterPro" id="IPR019462">
    <property type="entry name" value="DNA-dir_RNA_pol_bsu_external_1"/>
</dbReference>
<dbReference type="InterPro" id="IPR015712">
    <property type="entry name" value="DNA-dir_RNA_pol_su2"/>
</dbReference>
<dbReference type="InterPro" id="IPR007120">
    <property type="entry name" value="DNA-dir_RNAP_su2_dom"/>
</dbReference>
<dbReference type="InterPro" id="IPR037033">
    <property type="entry name" value="DNA-dir_RNAP_su2_hyb_sf"/>
</dbReference>
<dbReference type="InterPro" id="IPR010243">
    <property type="entry name" value="RNA_pol_bsu_bac"/>
</dbReference>
<dbReference type="InterPro" id="IPR007121">
    <property type="entry name" value="RNA_pol_bsu_CS"/>
</dbReference>
<dbReference type="InterPro" id="IPR007644">
    <property type="entry name" value="RNA_pol_bsu_protrusion"/>
</dbReference>
<dbReference type="InterPro" id="IPR007642">
    <property type="entry name" value="RNA_pol_Rpb2_2"/>
</dbReference>
<dbReference type="InterPro" id="IPR037034">
    <property type="entry name" value="RNA_pol_Rpb2_2_sf"/>
</dbReference>
<dbReference type="InterPro" id="IPR007645">
    <property type="entry name" value="RNA_pol_Rpb2_3"/>
</dbReference>
<dbReference type="InterPro" id="IPR007641">
    <property type="entry name" value="RNA_pol_Rpb2_7"/>
</dbReference>
<dbReference type="InterPro" id="IPR014724">
    <property type="entry name" value="RNA_pol_RPB2_OB-fold"/>
</dbReference>
<dbReference type="NCBIfam" id="NF001616">
    <property type="entry name" value="PRK00405.1"/>
    <property type="match status" value="1"/>
</dbReference>
<dbReference type="NCBIfam" id="TIGR02013">
    <property type="entry name" value="rpoB"/>
    <property type="match status" value="1"/>
</dbReference>
<dbReference type="PANTHER" id="PTHR20856">
    <property type="entry name" value="DNA-DIRECTED RNA POLYMERASE I SUBUNIT 2"/>
    <property type="match status" value="1"/>
</dbReference>
<dbReference type="Pfam" id="PF04563">
    <property type="entry name" value="RNA_pol_Rpb2_1"/>
    <property type="match status" value="1"/>
</dbReference>
<dbReference type="Pfam" id="PF04561">
    <property type="entry name" value="RNA_pol_Rpb2_2"/>
    <property type="match status" value="2"/>
</dbReference>
<dbReference type="Pfam" id="PF04565">
    <property type="entry name" value="RNA_pol_Rpb2_3"/>
    <property type="match status" value="1"/>
</dbReference>
<dbReference type="Pfam" id="PF10385">
    <property type="entry name" value="RNA_pol_Rpb2_45"/>
    <property type="match status" value="1"/>
</dbReference>
<dbReference type="Pfam" id="PF00562">
    <property type="entry name" value="RNA_pol_Rpb2_6"/>
    <property type="match status" value="1"/>
</dbReference>
<dbReference type="Pfam" id="PF04560">
    <property type="entry name" value="RNA_pol_Rpb2_7"/>
    <property type="match status" value="1"/>
</dbReference>
<dbReference type="SUPFAM" id="SSF64484">
    <property type="entry name" value="beta and beta-prime subunits of DNA dependent RNA-polymerase"/>
    <property type="match status" value="1"/>
</dbReference>
<dbReference type="PROSITE" id="PS01166">
    <property type="entry name" value="RNA_POL_BETA"/>
    <property type="match status" value="1"/>
</dbReference>
<organism>
    <name type="scientific">Shewanella woodyi (strain ATCC 51908 / MS32)</name>
    <dbReference type="NCBI Taxonomy" id="392500"/>
    <lineage>
        <taxon>Bacteria</taxon>
        <taxon>Pseudomonadati</taxon>
        <taxon>Pseudomonadota</taxon>
        <taxon>Gammaproteobacteria</taxon>
        <taxon>Alteromonadales</taxon>
        <taxon>Shewanellaceae</taxon>
        <taxon>Shewanella</taxon>
    </lineage>
</organism>
<comment type="function">
    <text evidence="1">DNA-dependent RNA polymerase catalyzes the transcription of DNA into RNA using the four ribonucleoside triphosphates as substrates.</text>
</comment>
<comment type="catalytic activity">
    <reaction evidence="1">
        <text>RNA(n) + a ribonucleoside 5'-triphosphate = RNA(n+1) + diphosphate</text>
        <dbReference type="Rhea" id="RHEA:21248"/>
        <dbReference type="Rhea" id="RHEA-COMP:14527"/>
        <dbReference type="Rhea" id="RHEA-COMP:17342"/>
        <dbReference type="ChEBI" id="CHEBI:33019"/>
        <dbReference type="ChEBI" id="CHEBI:61557"/>
        <dbReference type="ChEBI" id="CHEBI:140395"/>
        <dbReference type="EC" id="2.7.7.6"/>
    </reaction>
</comment>
<comment type="subunit">
    <text evidence="1">The RNAP catalytic core consists of 2 alpha, 1 beta, 1 beta' and 1 omega subunit. When a sigma factor is associated with the core the holoenzyme is formed, which can initiate transcription.</text>
</comment>
<comment type="similarity">
    <text evidence="1">Belongs to the RNA polymerase beta chain family.</text>
</comment>
<reference key="1">
    <citation type="submission" date="2008-02" db="EMBL/GenBank/DDBJ databases">
        <title>Complete sequence of Shewanella woodyi ATCC 51908.</title>
        <authorList>
            <consortium name="US DOE Joint Genome Institute"/>
            <person name="Copeland A."/>
            <person name="Lucas S."/>
            <person name="Lapidus A."/>
            <person name="Glavina del Rio T."/>
            <person name="Dalin E."/>
            <person name="Tice H."/>
            <person name="Bruce D."/>
            <person name="Goodwin L."/>
            <person name="Pitluck S."/>
            <person name="Sims D."/>
            <person name="Brettin T."/>
            <person name="Detter J.C."/>
            <person name="Han C."/>
            <person name="Kuske C.R."/>
            <person name="Schmutz J."/>
            <person name="Larimer F."/>
            <person name="Land M."/>
            <person name="Hauser L."/>
            <person name="Kyrpides N."/>
            <person name="Lykidis A."/>
            <person name="Zhao J.-S."/>
            <person name="Richardson P."/>
        </authorList>
    </citation>
    <scope>NUCLEOTIDE SEQUENCE [LARGE SCALE GENOMIC DNA]</scope>
    <source>
        <strain>ATCC 51908 / MS32</strain>
    </source>
</reference>
<name>RPOB_SHEWM</name>
<proteinExistence type="inferred from homology"/>
<keyword id="KW-0240">DNA-directed RNA polymerase</keyword>
<keyword id="KW-0548">Nucleotidyltransferase</keyword>
<keyword id="KW-1185">Reference proteome</keyword>
<keyword id="KW-0804">Transcription</keyword>
<keyword id="KW-0808">Transferase</keyword>
<gene>
    <name evidence="1" type="primary">rpoB</name>
    <name type="ordered locus">Swoo_4697</name>
</gene>
<sequence>MVYSYSEKKRIRKDFGKRPQVLDIPYLLSIQLDSFKKFTDQDPTGERGFEAAFRSVFPIKSFSGNSELQYVSYKLGEPVFDVKECQIRGVTYSAPLRVKLRMVLYDREAAPGTVKDIKEQEVYMGDIPLMTENGTFVINGTERVIVSQLHRSPGVFFDHDRGKTHSSGKVLYNARIIPYRGSWLDFEFDPKDALFVRIDRRRKLAASIILRALDYSTQDILDLFFDRVNFKIKKDSLVMDLVAERLRGETASYDIKDVEGTIIVEKGRRITARHIRQLEKSNTTELEVPVDYIVGKISGQDYIDPDTGEVLVSANAEMTLEDLAKLSLAGIKEISTLYINELDNGAYMSDTLRIDSTTNRLEALVEIYRMMRPGEPPTKDAAEALFQNLFFSEERYDLSKVGRMKFNRRLGIDDDEGTGILSKEDIVAVMKNIITIRNGNDEVDDIDHLGNRRIRSVGEMAENQFRVGLVRVERAVRERLSLGDLNELMPQDLINAKPISAAVKEFFGSSQLSQFMDQNNPLSEVTHKRRISALGPGGLTRERAGFEVRDVHPTHYGRLCPIETPEGPNIGLINSLASFARTNSYGFLETPYRKVIDGVVTDQVDYLSAIEEGRYVIAQAIVDLDENGRMMDELIACRHKGDSTFMGAADIQYMDVSPQQIISVAASLIPFLEHDDANRALMGANMQRQAVPTLKADKPLVGTGIERTLAVDSGVVVVAKRGGYIDYVDASRIVVKVNESELRPGEAGIDIYNLTKYTRSNQNTCINQRPCCAMGDPVVTGDVLADGPSTDLGDLALGQNMRIAFMPWNGYNFEDSILISERVAQEDRFTTIHIQELSCIARDTKLGSEEITADIPNVGESALSKLDESGIVYIGAEVKGGDILVGKVTPKGETQLTPEEKLLRAIFGEKASDVKDSSLRVPNSVKGTIIDVQVFTRDGVEKDKRAVEIEEMHVRQAKKDLTEEFQILEEGVYGRARNLLLSAGFNEAQLDAIPRSQLLSQSIDDEGKQTELEQLAEQHDELKADFDKKFEVKRRKITQGDDLAPGVLKIVKVYLAVKRTIQPGDKMAGRHGNKGVISKINPVEDMPYDENGNPIDIVLNPLGVPSRMNIGQVLEVHLGAAAKGIGDKIAAMLEEQRELAELRGYIKEVYELGEEVQQRVDIDSFTDDEVVRLAKNLKGGIPTATPAFDGAKEKEIKEMLALAGLPTTGQRKLFDGRTGDEFERQVTVGYMYMLKLNHLVDDKMHARSTGSYSLVTQQPLGGKAQFGGQRFGEMEVWALEAYGAAYTLQEMLTVKSDDVNGRTNMYKNIVDGNHQMQPGMPESFNVLLKEIRSLGINIELDQD</sequence>
<evidence type="ECO:0000255" key="1">
    <source>
        <dbReference type="HAMAP-Rule" id="MF_01321"/>
    </source>
</evidence>
<feature type="chain" id="PRO_1000141738" description="DNA-directed RNA polymerase subunit beta">
    <location>
        <begin position="1"/>
        <end position="1343"/>
    </location>
</feature>
<protein>
    <recommendedName>
        <fullName evidence="1">DNA-directed RNA polymerase subunit beta</fullName>
        <shortName evidence="1">RNAP subunit beta</shortName>
        <ecNumber evidence="1">2.7.7.6</ecNumber>
    </recommendedName>
    <alternativeName>
        <fullName evidence="1">RNA polymerase subunit beta</fullName>
    </alternativeName>
    <alternativeName>
        <fullName evidence="1">Transcriptase subunit beta</fullName>
    </alternativeName>
</protein>